<proteinExistence type="evidence at protein level"/>
<name>VATC_THET8</name>
<evidence type="ECO:0000305" key="1"/>
<evidence type="ECO:0007829" key="2">
    <source>
        <dbReference type="PDB" id="1R5Z"/>
    </source>
</evidence>
<evidence type="ECO:0007829" key="3">
    <source>
        <dbReference type="PDB" id="1V9M"/>
    </source>
</evidence>
<evidence type="ECO:0007829" key="4">
    <source>
        <dbReference type="PDB" id="6QUM"/>
    </source>
</evidence>
<accession>P74902</accession>
<accession>Q5SIT9</accession>
<reference key="1">
    <citation type="journal article" date="2000" name="J. Biol. Chem.">
        <title>V-type H+-ATPase/synthase from a thermophilic eubacterium, Thermus thermophilus. Subunit structure and operon.</title>
        <authorList>
            <person name="Yokoyama K."/>
            <person name="Ohkuma S."/>
            <person name="Taguchi H."/>
            <person name="Yasunaga T."/>
            <person name="Wakabayashi T."/>
            <person name="Yoshida M."/>
        </authorList>
    </citation>
    <scope>NUCLEOTIDE SEQUENCE [GENOMIC DNA]</scope>
</reference>
<reference key="2">
    <citation type="submission" date="2004-11" db="EMBL/GenBank/DDBJ databases">
        <title>Complete genome sequence of Thermus thermophilus HB8.</title>
        <authorList>
            <person name="Masui R."/>
            <person name="Kurokawa K."/>
            <person name="Nakagawa N."/>
            <person name="Tokunaga F."/>
            <person name="Koyama Y."/>
            <person name="Shibata T."/>
            <person name="Oshima T."/>
            <person name="Yokoyama S."/>
            <person name="Yasunaga T."/>
            <person name="Kuramitsu S."/>
        </authorList>
    </citation>
    <scope>NUCLEOTIDE SEQUENCE [LARGE SCALE GENOMIC DNA]</scope>
    <source>
        <strain>ATCC 27634 / DSM 579 / HB8</strain>
    </source>
</reference>
<gene>
    <name type="primary">atpC</name>
    <name type="ordered locus">TTHA1275</name>
</gene>
<protein>
    <recommendedName>
        <fullName>V-type ATP synthase subunit C</fullName>
    </recommendedName>
    <alternativeName>
        <fullName>V-ATPase subunit C</fullName>
    </alternativeName>
</protein>
<sequence>MADDFAYLNARVRVRRGTLLKESFFQEALDLSFADFLRLLSETVYGGELAGQGLPDVDRAVLRTQAKLVGDLPRLVTGEAREAVRLLLLRNDLHNLQALLRAKATGRPFEEVLLLPGTLREEVWRQAYEAQDPAGMAQVLAVPGHPLARALRAVLRETQDLARVEALLAKRFFEDVAKAAKGLDQPALRDYLALEVDAENLRTAFKLQGSGLAPDAFFLKGGRFVDRVRFARLMEGDYAVLDELSGTPFSGLSGVRDLKALERGLRCVLLKEAKKGVQDPLGVGLVLAYVKEREWEAVRLRLLARRAYFGLPRAQVEEEVVCP</sequence>
<comment type="function">
    <text>Produces ATP from ADP in the presence of a proton gradient across the membrane.</text>
</comment>
<comment type="similarity">
    <text evidence="1">Belongs to the V-ATPase V0D/AC39 subunit family.</text>
</comment>
<dbReference type="EMBL" id="D63799">
    <property type="protein sequence ID" value="BAA09871.1"/>
    <property type="molecule type" value="Genomic_DNA"/>
</dbReference>
<dbReference type="EMBL" id="AP008226">
    <property type="protein sequence ID" value="BAD71098.1"/>
    <property type="molecule type" value="Genomic_DNA"/>
</dbReference>
<dbReference type="RefSeq" id="WP_011228562.1">
    <property type="nucleotide sequence ID" value="NC_006461.1"/>
</dbReference>
<dbReference type="RefSeq" id="YP_144541.1">
    <property type="nucleotide sequence ID" value="NC_006461.1"/>
</dbReference>
<dbReference type="PDB" id="1R5Z">
    <property type="method" value="X-ray"/>
    <property type="resolution" value="1.95 A"/>
    <property type="chains" value="A/B/C=1-323"/>
</dbReference>
<dbReference type="PDB" id="1V9M">
    <property type="method" value="X-ray"/>
    <property type="resolution" value="1.85 A"/>
    <property type="chains" value="A=1-323"/>
</dbReference>
<dbReference type="PDB" id="3J0J">
    <property type="method" value="EM"/>
    <property type="resolution" value="9.70 A"/>
    <property type="chains" value="M=1-323"/>
</dbReference>
<dbReference type="PDB" id="5GAR">
    <property type="method" value="EM"/>
    <property type="resolution" value="6.40 A"/>
    <property type="chains" value="M=1-323"/>
</dbReference>
<dbReference type="PDB" id="5GAS">
    <property type="method" value="EM"/>
    <property type="resolution" value="9.50 A"/>
    <property type="chains" value="M=1-323"/>
</dbReference>
<dbReference type="PDB" id="5TSJ">
    <property type="method" value="EM"/>
    <property type="resolution" value="8.70 A"/>
    <property type="chains" value="M=1-323"/>
</dbReference>
<dbReference type="PDB" id="5Y5X">
    <property type="method" value="EM"/>
    <property type="resolution" value="5.00 A"/>
    <property type="chains" value="M=1-323"/>
</dbReference>
<dbReference type="PDB" id="5Y5Y">
    <property type="method" value="EM"/>
    <property type="resolution" value="4.70 A"/>
    <property type="chains" value="M=1-323"/>
</dbReference>
<dbReference type="PDB" id="5Y5Z">
    <property type="method" value="EM"/>
    <property type="resolution" value="6.70 A"/>
    <property type="chains" value="M=1-323"/>
</dbReference>
<dbReference type="PDB" id="5Y60">
    <property type="method" value="EM"/>
    <property type="resolution" value="7.50 A"/>
    <property type="chains" value="M=1-323"/>
</dbReference>
<dbReference type="PDB" id="6LY9">
    <property type="method" value="EM"/>
    <property type="resolution" value="3.93 A"/>
    <property type="chains" value="M=1-323"/>
</dbReference>
<dbReference type="PDB" id="6QUM">
    <property type="method" value="EM"/>
    <property type="resolution" value="3.25 A"/>
    <property type="chains" value="M=1-323"/>
</dbReference>
<dbReference type="PDB" id="6R0W">
    <property type="method" value="EM"/>
    <property type="resolution" value="3.60 A"/>
    <property type="chains" value="M=1-323"/>
</dbReference>
<dbReference type="PDB" id="6R0Y">
    <property type="method" value="EM"/>
    <property type="resolution" value="3.90 A"/>
    <property type="chains" value="M=1-323"/>
</dbReference>
<dbReference type="PDB" id="6R0Z">
    <property type="method" value="EM"/>
    <property type="resolution" value="3.80 A"/>
    <property type="chains" value="M=1-323"/>
</dbReference>
<dbReference type="PDB" id="6R10">
    <property type="method" value="EM"/>
    <property type="resolution" value="4.30 A"/>
    <property type="chains" value="M=1-323"/>
</dbReference>
<dbReference type="PDB" id="8YWT">
    <property type="method" value="EM"/>
    <property type="resolution" value="2.80 A"/>
    <property type="chains" value="M=1-323"/>
</dbReference>
<dbReference type="PDB" id="8YXZ">
    <property type="method" value="EM"/>
    <property type="resolution" value="3.00 A"/>
    <property type="chains" value="M=1-323"/>
</dbReference>
<dbReference type="PDB" id="8YY0">
    <property type="method" value="EM"/>
    <property type="resolution" value="3.60 A"/>
    <property type="chains" value="M=1-323"/>
</dbReference>
<dbReference type="PDB" id="8YY1">
    <property type="method" value="EM"/>
    <property type="resolution" value="3.60 A"/>
    <property type="chains" value="M=3-322"/>
</dbReference>
<dbReference type="PDBsum" id="1R5Z"/>
<dbReference type="PDBsum" id="1V9M"/>
<dbReference type="PDBsum" id="3J0J"/>
<dbReference type="PDBsum" id="5GAR"/>
<dbReference type="PDBsum" id="5GAS"/>
<dbReference type="PDBsum" id="5TSJ"/>
<dbReference type="PDBsum" id="5Y5X"/>
<dbReference type="PDBsum" id="5Y5Y"/>
<dbReference type="PDBsum" id="5Y5Z"/>
<dbReference type="PDBsum" id="5Y60"/>
<dbReference type="PDBsum" id="6LY9"/>
<dbReference type="PDBsum" id="6QUM"/>
<dbReference type="PDBsum" id="6R0W"/>
<dbReference type="PDBsum" id="6R0Y"/>
<dbReference type="PDBsum" id="6R0Z"/>
<dbReference type="PDBsum" id="6R10"/>
<dbReference type="PDBsum" id="8YWT"/>
<dbReference type="PDBsum" id="8YXZ"/>
<dbReference type="PDBsum" id="8YY0"/>
<dbReference type="PDBsum" id="8YY1"/>
<dbReference type="EMDB" id="EMD-30015"/>
<dbReference type="EMDB" id="EMD-31841"/>
<dbReference type="EMDB" id="EMD-31844"/>
<dbReference type="EMDB" id="EMD-31846"/>
<dbReference type="EMDB" id="EMD-31847"/>
<dbReference type="EMDB" id="EMD-31848"/>
<dbReference type="EMDB" id="EMD-31851"/>
<dbReference type="EMDB" id="EMD-31852"/>
<dbReference type="EMDB" id="EMD-31855"/>
<dbReference type="EMDB" id="EMD-31856"/>
<dbReference type="EMDB" id="EMD-31859"/>
<dbReference type="EMDB" id="EMD-31862"/>
<dbReference type="EMDB" id="EMD-31865"/>
<dbReference type="EMDB" id="EMD-31867"/>
<dbReference type="EMDB" id="EMD-31870"/>
<dbReference type="EMDB" id="EMD-31872"/>
<dbReference type="EMDB" id="EMD-39644"/>
<dbReference type="EMDB" id="EMD-39661"/>
<dbReference type="EMDB" id="EMD-39662"/>
<dbReference type="EMDB" id="EMD-39663"/>
<dbReference type="EMDB" id="EMD-4640"/>
<dbReference type="EMDB" id="EMD-4699"/>
<dbReference type="EMDB" id="EMD-4700"/>
<dbReference type="EMDB" id="EMD-4702"/>
<dbReference type="EMDB" id="EMD-4703"/>
<dbReference type="EMDB" id="EMD-6810"/>
<dbReference type="EMDB" id="EMD-6811"/>
<dbReference type="EMDB" id="EMD-6812"/>
<dbReference type="EMDB" id="EMD-6813"/>
<dbReference type="EMDB" id="EMD-8016"/>
<dbReference type="EMDB" id="EMD-8017"/>
<dbReference type="EMDB" id="EMD-8462"/>
<dbReference type="SMR" id="P74902"/>
<dbReference type="IntAct" id="P74902">
    <property type="interactions" value="1"/>
</dbReference>
<dbReference type="TCDB" id="3.A.2.2.1">
    <property type="family name" value="the h+- or na+-translocating f-type, v-type and a-type atpase (f-atpase) superfamily"/>
</dbReference>
<dbReference type="EnsemblBacteria" id="BAD71098">
    <property type="protein sequence ID" value="BAD71098"/>
    <property type="gene ID" value="BAD71098"/>
</dbReference>
<dbReference type="GeneID" id="3168086"/>
<dbReference type="KEGG" id="ttj:TTHA1275"/>
<dbReference type="PATRIC" id="fig|300852.9.peg.1254"/>
<dbReference type="eggNOG" id="COG1527">
    <property type="taxonomic scope" value="Bacteria"/>
</dbReference>
<dbReference type="HOGENOM" id="CLU_073549_0_0_0"/>
<dbReference type="PhylomeDB" id="P74902"/>
<dbReference type="EvolutionaryTrace" id="P74902"/>
<dbReference type="Proteomes" id="UP000000532">
    <property type="component" value="Chromosome"/>
</dbReference>
<dbReference type="GO" id="GO:0033179">
    <property type="term" value="C:proton-transporting V-type ATPase, V0 domain"/>
    <property type="evidence" value="ECO:0007669"/>
    <property type="project" value="InterPro"/>
</dbReference>
<dbReference type="GO" id="GO:0005524">
    <property type="term" value="F:ATP binding"/>
    <property type="evidence" value="ECO:0007669"/>
    <property type="project" value="UniProtKB-UniRule"/>
</dbReference>
<dbReference type="GO" id="GO:0046933">
    <property type="term" value="F:proton-transporting ATP synthase activity, rotational mechanism"/>
    <property type="evidence" value="ECO:0007669"/>
    <property type="project" value="UniProtKB-UniRule"/>
</dbReference>
<dbReference type="GO" id="GO:0046961">
    <property type="term" value="F:proton-transporting ATPase activity, rotational mechanism"/>
    <property type="evidence" value="ECO:0007669"/>
    <property type="project" value="InterPro"/>
</dbReference>
<dbReference type="GO" id="GO:0042777">
    <property type="term" value="P:proton motive force-driven plasma membrane ATP synthesis"/>
    <property type="evidence" value="ECO:0007669"/>
    <property type="project" value="UniProtKB-UniRule"/>
</dbReference>
<dbReference type="Gene3D" id="1.10.132.50">
    <property type="entry name" value="ATP synthase (C/AC39) subunit, domain 3"/>
    <property type="match status" value="1"/>
</dbReference>
<dbReference type="Gene3D" id="1.20.1690.10">
    <property type="entry name" value="V-type ATP synthase subunit C domain"/>
    <property type="match status" value="2"/>
</dbReference>
<dbReference type="HAMAP" id="MF_00314">
    <property type="entry name" value="ATP_synth_C_arch"/>
    <property type="match status" value="1"/>
</dbReference>
<dbReference type="InterPro" id="IPR036079">
    <property type="entry name" value="ATPase_csu/dsu_sf"/>
</dbReference>
<dbReference type="InterPro" id="IPR014272">
    <property type="entry name" value="ATPase_V0-cplx_csu"/>
</dbReference>
<dbReference type="InterPro" id="IPR002843">
    <property type="entry name" value="ATPase_V0-cplx_csu/dsu"/>
</dbReference>
<dbReference type="InterPro" id="IPR050873">
    <property type="entry name" value="V-ATPase_V0D/AC39_subunit"/>
</dbReference>
<dbReference type="InterPro" id="IPR035067">
    <property type="entry name" value="V-type_ATPase_csu/dsu"/>
</dbReference>
<dbReference type="InterPro" id="IPR044911">
    <property type="entry name" value="V-type_ATPase_csu/dsu_dom_3"/>
</dbReference>
<dbReference type="PANTHER" id="PTHR38682">
    <property type="entry name" value="V-TYPE ATP SYNTHASE SUBUNIT C"/>
    <property type="match status" value="1"/>
</dbReference>
<dbReference type="PANTHER" id="PTHR38682:SF1">
    <property type="entry name" value="V-TYPE ATP SYNTHASE SUBUNIT C"/>
    <property type="match status" value="1"/>
</dbReference>
<dbReference type="Pfam" id="PF01992">
    <property type="entry name" value="vATP-synt_AC39"/>
    <property type="match status" value="1"/>
</dbReference>
<dbReference type="SUPFAM" id="SSF103486">
    <property type="entry name" value="V-type ATP synthase subunit C"/>
    <property type="match status" value="1"/>
</dbReference>
<organism>
    <name type="scientific">Thermus thermophilus (strain ATCC 27634 / DSM 579 / HB8)</name>
    <dbReference type="NCBI Taxonomy" id="300852"/>
    <lineage>
        <taxon>Bacteria</taxon>
        <taxon>Thermotogati</taxon>
        <taxon>Deinococcota</taxon>
        <taxon>Deinococci</taxon>
        <taxon>Thermales</taxon>
        <taxon>Thermaceae</taxon>
        <taxon>Thermus</taxon>
    </lineage>
</organism>
<feature type="chain" id="PRO_0000119376" description="V-type ATP synthase subunit C">
    <location>
        <begin position="1"/>
        <end position="323"/>
    </location>
</feature>
<feature type="helix" evidence="3">
    <location>
        <begin position="6"/>
        <end position="16"/>
    </location>
</feature>
<feature type="helix" evidence="3">
    <location>
        <begin position="22"/>
        <end position="28"/>
    </location>
</feature>
<feature type="helix" evidence="3">
    <location>
        <begin position="33"/>
        <end position="41"/>
    </location>
</feature>
<feature type="helix" evidence="3">
    <location>
        <begin position="44"/>
        <end position="48"/>
    </location>
</feature>
<feature type="strand" evidence="2">
    <location>
        <begin position="51"/>
        <end position="53"/>
    </location>
</feature>
<feature type="helix" evidence="3">
    <location>
        <begin position="54"/>
        <end position="68"/>
    </location>
</feature>
<feature type="turn" evidence="3">
    <location>
        <begin position="69"/>
        <end position="71"/>
    </location>
</feature>
<feature type="helix" evidence="3">
    <location>
        <begin position="72"/>
        <end position="75"/>
    </location>
</feature>
<feature type="helix" evidence="3">
    <location>
        <begin position="78"/>
        <end position="104"/>
    </location>
</feature>
<feature type="helix" evidence="3">
    <location>
        <begin position="109"/>
        <end position="111"/>
    </location>
</feature>
<feature type="helix" evidence="3">
    <location>
        <begin position="121"/>
        <end position="129"/>
    </location>
</feature>
<feature type="strand" evidence="3">
    <location>
        <begin position="130"/>
        <end position="132"/>
    </location>
</feature>
<feature type="helix" evidence="3">
    <location>
        <begin position="133"/>
        <end position="141"/>
    </location>
</feature>
<feature type="turn" evidence="3">
    <location>
        <begin position="142"/>
        <end position="144"/>
    </location>
</feature>
<feature type="helix" evidence="3">
    <location>
        <begin position="146"/>
        <end position="155"/>
    </location>
</feature>
<feature type="helix" evidence="3">
    <location>
        <begin position="161"/>
        <end position="177"/>
    </location>
</feature>
<feature type="helix" evidence="3">
    <location>
        <begin position="187"/>
        <end position="206"/>
    </location>
</feature>
<feature type="turn" evidence="3">
    <location>
        <begin position="207"/>
        <end position="209"/>
    </location>
</feature>
<feature type="helix" evidence="3">
    <location>
        <begin position="214"/>
        <end position="216"/>
    </location>
</feature>
<feature type="helix" evidence="3">
    <location>
        <begin position="227"/>
        <end position="234"/>
    </location>
</feature>
<feature type="helix" evidence="3">
    <location>
        <begin position="238"/>
        <end position="242"/>
    </location>
</feature>
<feature type="strand" evidence="4">
    <location>
        <begin position="246"/>
        <end position="248"/>
    </location>
</feature>
<feature type="helix" evidence="3">
    <location>
        <begin position="250"/>
        <end position="252"/>
    </location>
</feature>
<feature type="helix" evidence="3">
    <location>
        <begin position="258"/>
        <end position="273"/>
    </location>
</feature>
<feature type="helix" evidence="3">
    <location>
        <begin position="274"/>
        <end position="278"/>
    </location>
</feature>
<feature type="strand" evidence="2">
    <location>
        <begin position="280"/>
        <end position="282"/>
    </location>
</feature>
<feature type="helix" evidence="3">
    <location>
        <begin position="284"/>
        <end position="309"/>
    </location>
</feature>
<feature type="helix" evidence="3">
    <location>
        <begin position="313"/>
        <end position="319"/>
    </location>
</feature>
<keyword id="KW-0002">3D-structure</keyword>
<keyword id="KW-0066">ATP synthesis</keyword>
<keyword id="KW-0375">Hydrogen ion transport</keyword>
<keyword id="KW-0406">Ion transport</keyword>
<keyword id="KW-1185">Reference proteome</keyword>
<keyword id="KW-0813">Transport</keyword>